<gene>
    <name evidence="1" type="primary">leuS</name>
    <name type="ordered locus">SG0803</name>
</gene>
<keyword id="KW-0030">Aminoacyl-tRNA synthetase</keyword>
<keyword id="KW-0067">ATP-binding</keyword>
<keyword id="KW-0963">Cytoplasm</keyword>
<keyword id="KW-0436">Ligase</keyword>
<keyword id="KW-0547">Nucleotide-binding</keyword>
<keyword id="KW-0648">Protein biosynthesis</keyword>
<feature type="chain" id="PRO_1000009435" description="Leucine--tRNA ligase">
    <location>
        <begin position="1"/>
        <end position="860"/>
    </location>
</feature>
<feature type="short sequence motif" description="'HIGH' region">
    <location>
        <begin position="42"/>
        <end position="52"/>
    </location>
</feature>
<feature type="short sequence motif" description="'KMSKS' region">
    <location>
        <begin position="619"/>
        <end position="623"/>
    </location>
</feature>
<feature type="binding site" evidence="1">
    <location>
        <position position="622"/>
    </location>
    <ligand>
        <name>ATP</name>
        <dbReference type="ChEBI" id="CHEBI:30616"/>
    </ligand>
</feature>
<proteinExistence type="inferred from homology"/>
<protein>
    <recommendedName>
        <fullName evidence="1">Leucine--tRNA ligase</fullName>
        <ecNumber evidence="1">6.1.1.4</ecNumber>
    </recommendedName>
    <alternativeName>
        <fullName evidence="1">Leucyl-tRNA synthetase</fullName>
        <shortName evidence="1">LeuRS</shortName>
    </alternativeName>
</protein>
<organism>
    <name type="scientific">Sodalis glossinidius (strain morsitans)</name>
    <dbReference type="NCBI Taxonomy" id="343509"/>
    <lineage>
        <taxon>Bacteria</taxon>
        <taxon>Pseudomonadati</taxon>
        <taxon>Pseudomonadota</taxon>
        <taxon>Gammaproteobacteria</taxon>
        <taxon>Enterobacterales</taxon>
        <taxon>Bruguierivoracaceae</taxon>
        <taxon>Sodalis</taxon>
    </lineage>
</organism>
<dbReference type="EC" id="6.1.1.4" evidence="1"/>
<dbReference type="EMBL" id="AP008232">
    <property type="protein sequence ID" value="BAE74078.1"/>
    <property type="molecule type" value="Genomic_DNA"/>
</dbReference>
<dbReference type="RefSeq" id="WP_011410666.1">
    <property type="nucleotide sequence ID" value="NC_007712.1"/>
</dbReference>
<dbReference type="SMR" id="Q2NUU7"/>
<dbReference type="STRING" id="343509.SG0803"/>
<dbReference type="KEGG" id="sgl:SG0803"/>
<dbReference type="eggNOG" id="COG0495">
    <property type="taxonomic scope" value="Bacteria"/>
</dbReference>
<dbReference type="HOGENOM" id="CLU_004427_0_0_6"/>
<dbReference type="OrthoDB" id="9810365at2"/>
<dbReference type="BioCyc" id="SGLO343509:SGP1_RS07065-MONOMER"/>
<dbReference type="Proteomes" id="UP000001932">
    <property type="component" value="Chromosome"/>
</dbReference>
<dbReference type="GO" id="GO:0005829">
    <property type="term" value="C:cytosol"/>
    <property type="evidence" value="ECO:0007669"/>
    <property type="project" value="TreeGrafter"/>
</dbReference>
<dbReference type="GO" id="GO:0002161">
    <property type="term" value="F:aminoacyl-tRNA deacylase activity"/>
    <property type="evidence" value="ECO:0007669"/>
    <property type="project" value="InterPro"/>
</dbReference>
<dbReference type="GO" id="GO:0005524">
    <property type="term" value="F:ATP binding"/>
    <property type="evidence" value="ECO:0007669"/>
    <property type="project" value="UniProtKB-UniRule"/>
</dbReference>
<dbReference type="GO" id="GO:0004823">
    <property type="term" value="F:leucine-tRNA ligase activity"/>
    <property type="evidence" value="ECO:0007669"/>
    <property type="project" value="UniProtKB-UniRule"/>
</dbReference>
<dbReference type="GO" id="GO:0006429">
    <property type="term" value="P:leucyl-tRNA aminoacylation"/>
    <property type="evidence" value="ECO:0007669"/>
    <property type="project" value="UniProtKB-UniRule"/>
</dbReference>
<dbReference type="CDD" id="cd07958">
    <property type="entry name" value="Anticodon_Ia_Leu_BEm"/>
    <property type="match status" value="1"/>
</dbReference>
<dbReference type="CDD" id="cd00812">
    <property type="entry name" value="LeuRS_core"/>
    <property type="match status" value="1"/>
</dbReference>
<dbReference type="FunFam" id="1.10.730.10:FF:000002">
    <property type="entry name" value="Leucine--tRNA ligase"/>
    <property type="match status" value="1"/>
</dbReference>
<dbReference type="FunFam" id="2.20.28.290:FF:000001">
    <property type="entry name" value="Leucine--tRNA ligase"/>
    <property type="match status" value="1"/>
</dbReference>
<dbReference type="FunFam" id="3.10.20.590:FF:000001">
    <property type="entry name" value="Leucine--tRNA ligase"/>
    <property type="match status" value="1"/>
</dbReference>
<dbReference type="FunFam" id="3.40.50.620:FF:000003">
    <property type="entry name" value="Leucine--tRNA ligase"/>
    <property type="match status" value="1"/>
</dbReference>
<dbReference type="FunFam" id="3.40.50.620:FF:000124">
    <property type="entry name" value="Leucine--tRNA ligase"/>
    <property type="match status" value="1"/>
</dbReference>
<dbReference type="FunFam" id="3.90.740.10:FF:000012">
    <property type="entry name" value="Leucine--tRNA ligase"/>
    <property type="match status" value="1"/>
</dbReference>
<dbReference type="Gene3D" id="2.20.28.290">
    <property type="match status" value="1"/>
</dbReference>
<dbReference type="Gene3D" id="3.10.20.590">
    <property type="match status" value="1"/>
</dbReference>
<dbReference type="Gene3D" id="3.40.50.620">
    <property type="entry name" value="HUPs"/>
    <property type="match status" value="2"/>
</dbReference>
<dbReference type="Gene3D" id="1.10.730.10">
    <property type="entry name" value="Isoleucyl-tRNA Synthetase, Domain 1"/>
    <property type="match status" value="1"/>
</dbReference>
<dbReference type="Gene3D" id="3.90.740.10">
    <property type="entry name" value="Valyl/Leucyl/Isoleucyl-tRNA synthetase, editing domain"/>
    <property type="match status" value="1"/>
</dbReference>
<dbReference type="HAMAP" id="MF_00049_B">
    <property type="entry name" value="Leu_tRNA_synth_B"/>
    <property type="match status" value="1"/>
</dbReference>
<dbReference type="InterPro" id="IPR001412">
    <property type="entry name" value="aa-tRNA-synth_I_CS"/>
</dbReference>
<dbReference type="InterPro" id="IPR002300">
    <property type="entry name" value="aa-tRNA-synth_Ia"/>
</dbReference>
<dbReference type="InterPro" id="IPR002302">
    <property type="entry name" value="Leu-tRNA-ligase"/>
</dbReference>
<dbReference type="InterPro" id="IPR025709">
    <property type="entry name" value="Leu_tRNA-synth_edit"/>
</dbReference>
<dbReference type="InterPro" id="IPR013155">
    <property type="entry name" value="M/V/L/I-tRNA-synth_anticd-bd"/>
</dbReference>
<dbReference type="InterPro" id="IPR015413">
    <property type="entry name" value="Methionyl/Leucyl_tRNA_Synth"/>
</dbReference>
<dbReference type="InterPro" id="IPR014729">
    <property type="entry name" value="Rossmann-like_a/b/a_fold"/>
</dbReference>
<dbReference type="InterPro" id="IPR009080">
    <property type="entry name" value="tRNAsynth_Ia_anticodon-bd"/>
</dbReference>
<dbReference type="InterPro" id="IPR009008">
    <property type="entry name" value="Val/Leu/Ile-tRNA-synth_edit"/>
</dbReference>
<dbReference type="NCBIfam" id="TIGR00396">
    <property type="entry name" value="leuS_bact"/>
    <property type="match status" value="1"/>
</dbReference>
<dbReference type="PANTHER" id="PTHR43740:SF2">
    <property type="entry name" value="LEUCINE--TRNA LIGASE, MITOCHONDRIAL"/>
    <property type="match status" value="1"/>
</dbReference>
<dbReference type="PANTHER" id="PTHR43740">
    <property type="entry name" value="LEUCYL-TRNA SYNTHETASE"/>
    <property type="match status" value="1"/>
</dbReference>
<dbReference type="Pfam" id="PF08264">
    <property type="entry name" value="Anticodon_1"/>
    <property type="match status" value="1"/>
</dbReference>
<dbReference type="Pfam" id="PF00133">
    <property type="entry name" value="tRNA-synt_1"/>
    <property type="match status" value="2"/>
</dbReference>
<dbReference type="Pfam" id="PF13603">
    <property type="entry name" value="tRNA-synt_1_2"/>
    <property type="match status" value="1"/>
</dbReference>
<dbReference type="Pfam" id="PF09334">
    <property type="entry name" value="tRNA-synt_1g"/>
    <property type="match status" value="1"/>
</dbReference>
<dbReference type="PRINTS" id="PR00985">
    <property type="entry name" value="TRNASYNTHLEU"/>
</dbReference>
<dbReference type="SUPFAM" id="SSF47323">
    <property type="entry name" value="Anticodon-binding domain of a subclass of class I aminoacyl-tRNA synthetases"/>
    <property type="match status" value="1"/>
</dbReference>
<dbReference type="SUPFAM" id="SSF52374">
    <property type="entry name" value="Nucleotidylyl transferase"/>
    <property type="match status" value="1"/>
</dbReference>
<dbReference type="SUPFAM" id="SSF50677">
    <property type="entry name" value="ValRS/IleRS/LeuRS editing domain"/>
    <property type="match status" value="1"/>
</dbReference>
<dbReference type="PROSITE" id="PS00178">
    <property type="entry name" value="AA_TRNA_LIGASE_I"/>
    <property type="match status" value="1"/>
</dbReference>
<sequence>MQELYRPEEIESTVQQHWHENDTFKVTEDPCKEKYYCLSMLPYPSGRLHMGHVRNYTIGDVIARYQRMLGKNVLQPIGWDAFGLPAEGAAVKNNTAPAPWTYANIDYMKNQLKLLGFGYDWSREVTTCRPDYYRWEQWFFTRLYEKGLVYKKTSAVNWCPQDQTVLANEQVIDGCCWRCDTKVERKEIPQWFVKITAYADQLLYDLDKLESWPEQVKTMQRNWIGRSEGVEITFQVADSEETLTVYTTRPDTFMGTTYVAVAAGHPLSLQAAASNPALADFIQECRTTKVAEADMATMEKKGMATGLHAVHPLTGEMLPVWVANFVLMDYGTGAVMAVPGHDQRDFEFARKYDLPVKPVIRNADGSEPDLSAQAMTEKGVLFNSGEFDGLDFQAGFNAIADALVAQGVGERKVNYRLRDWGVSRQRYWGAPIPMMTLEDGTVVPTPEDQLPVVLPEDVVMDGISSPLKADPDWAKTTYNGQPALRETDTFDTFMESSWYYARYTCPDYDRGMLDPAAANYWLPVDQYIGGIEHAIMHLMYFRFYHKLLRDAGLVTSDEPAKRLLCQGMVLADAFYYLTSSGERVWVSPLEVSVERDEKGRIVKSTDASGRELVYAGMSKMSKSKNNGIDPQEMVEKYGADTVRLFMMFASPAEMTLEWQESGVEGANRFLKRVWKLAYEHPQQGPVGALDIDALNDEQKALRREVHKTIAKVTDDIGRRQTFNTAIAAIMELMNKLARAPQQTGQDRALLQEALVAVVRMLYPFTPHACFTLWRALGGEGDIDNAPWPVADEAAMVEDAKLVVIQVNGKLRGRITVPADADEALVCERASQEHLVAKHLEGTTVRKVIYVPGKLLNLVVG</sequence>
<reference key="1">
    <citation type="journal article" date="2006" name="Genome Res.">
        <title>Massive genome erosion and functional adaptations provide insights into the symbiotic lifestyle of Sodalis glossinidius in the tsetse host.</title>
        <authorList>
            <person name="Toh H."/>
            <person name="Weiss B.L."/>
            <person name="Perkin S.A.H."/>
            <person name="Yamashita A."/>
            <person name="Oshima K."/>
            <person name="Hattori M."/>
            <person name="Aksoy S."/>
        </authorList>
    </citation>
    <scope>NUCLEOTIDE SEQUENCE [LARGE SCALE GENOMIC DNA]</scope>
    <source>
        <strain>morsitans</strain>
    </source>
</reference>
<name>SYL_SODGM</name>
<comment type="catalytic activity">
    <reaction evidence="1">
        <text>tRNA(Leu) + L-leucine + ATP = L-leucyl-tRNA(Leu) + AMP + diphosphate</text>
        <dbReference type="Rhea" id="RHEA:11688"/>
        <dbReference type="Rhea" id="RHEA-COMP:9613"/>
        <dbReference type="Rhea" id="RHEA-COMP:9622"/>
        <dbReference type="ChEBI" id="CHEBI:30616"/>
        <dbReference type="ChEBI" id="CHEBI:33019"/>
        <dbReference type="ChEBI" id="CHEBI:57427"/>
        <dbReference type="ChEBI" id="CHEBI:78442"/>
        <dbReference type="ChEBI" id="CHEBI:78494"/>
        <dbReference type="ChEBI" id="CHEBI:456215"/>
        <dbReference type="EC" id="6.1.1.4"/>
    </reaction>
</comment>
<comment type="subcellular location">
    <subcellularLocation>
        <location evidence="1">Cytoplasm</location>
    </subcellularLocation>
</comment>
<comment type="similarity">
    <text evidence="1">Belongs to the class-I aminoacyl-tRNA synthetase family.</text>
</comment>
<accession>Q2NUU7</accession>
<evidence type="ECO:0000255" key="1">
    <source>
        <dbReference type="HAMAP-Rule" id="MF_00049"/>
    </source>
</evidence>